<comment type="function">
    <text evidence="1">Hydrolyzes ribosome-free peptidyl-tRNAs (with 1 or more amino acids incorporated), which drop off the ribosome during protein synthesis, or as a result of ribosome stalling.</text>
</comment>
<comment type="function">
    <text evidence="1">Catalyzes the release of premature peptidyl moieties from peptidyl-tRNA molecules trapped in stalled 50S ribosomal subunits, and thus maintains levels of free tRNAs and 50S ribosomes.</text>
</comment>
<comment type="catalytic activity">
    <reaction evidence="1">
        <text>an N-acyl-L-alpha-aminoacyl-tRNA + H2O = an N-acyl-L-amino acid + a tRNA + H(+)</text>
        <dbReference type="Rhea" id="RHEA:54448"/>
        <dbReference type="Rhea" id="RHEA-COMP:10123"/>
        <dbReference type="Rhea" id="RHEA-COMP:13883"/>
        <dbReference type="ChEBI" id="CHEBI:15377"/>
        <dbReference type="ChEBI" id="CHEBI:15378"/>
        <dbReference type="ChEBI" id="CHEBI:59874"/>
        <dbReference type="ChEBI" id="CHEBI:78442"/>
        <dbReference type="ChEBI" id="CHEBI:138191"/>
        <dbReference type="EC" id="3.1.1.29"/>
    </reaction>
</comment>
<comment type="subunit">
    <text evidence="1">Monomer.</text>
</comment>
<comment type="subcellular location">
    <subcellularLocation>
        <location evidence="1">Cytoplasm</location>
    </subcellularLocation>
</comment>
<comment type="similarity">
    <text evidence="1">Belongs to the PTH family.</text>
</comment>
<organism>
    <name type="scientific">Chlamydia pneumoniae</name>
    <name type="common">Chlamydophila pneumoniae</name>
    <dbReference type="NCBI Taxonomy" id="83558"/>
    <lineage>
        <taxon>Bacteria</taxon>
        <taxon>Pseudomonadati</taxon>
        <taxon>Chlamydiota</taxon>
        <taxon>Chlamydiia</taxon>
        <taxon>Chlamydiales</taxon>
        <taxon>Chlamydiaceae</taxon>
        <taxon>Chlamydia/Chlamydophila group</taxon>
        <taxon>Chlamydia</taxon>
    </lineage>
</organism>
<dbReference type="EC" id="3.1.1.29" evidence="1"/>
<dbReference type="EMBL" id="AE001363">
    <property type="protein sequence ID" value="AAD19088.1"/>
    <property type="molecule type" value="Genomic_DNA"/>
</dbReference>
<dbReference type="EMBL" id="AE002161">
    <property type="protein sequence ID" value="AAF38694.1"/>
    <property type="molecule type" value="Genomic_DNA"/>
</dbReference>
<dbReference type="EMBL" id="BA000008">
    <property type="protein sequence ID" value="BAA99158.1"/>
    <property type="molecule type" value="Genomic_DNA"/>
</dbReference>
<dbReference type="EMBL" id="AE009440">
    <property type="protein sequence ID" value="AAP98916.1"/>
    <property type="molecule type" value="Genomic_DNA"/>
</dbReference>
<dbReference type="PIR" id="D86609">
    <property type="entry name" value="D86609"/>
</dbReference>
<dbReference type="PIR" id="E72014">
    <property type="entry name" value="E72014"/>
</dbReference>
<dbReference type="RefSeq" id="NP_225145.1">
    <property type="nucleotide sequence ID" value="NC_000922.1"/>
</dbReference>
<dbReference type="RefSeq" id="WP_010883585.1">
    <property type="nucleotide sequence ID" value="NZ_LN847257.1"/>
</dbReference>
<dbReference type="SMR" id="Q9Z6V6"/>
<dbReference type="STRING" id="406984.CPK_ORF00365"/>
<dbReference type="GeneID" id="45051007"/>
<dbReference type="KEGG" id="cpa:CP_0909"/>
<dbReference type="KEGG" id="cpj:pth"/>
<dbReference type="KEGG" id="cpn:CPn_0950"/>
<dbReference type="KEGG" id="cpt:CpB0987"/>
<dbReference type="PATRIC" id="fig|115713.3.peg.1040"/>
<dbReference type="eggNOG" id="COG0193">
    <property type="taxonomic scope" value="Bacteria"/>
</dbReference>
<dbReference type="HOGENOM" id="CLU_062456_2_2_0"/>
<dbReference type="OrthoDB" id="9800507at2"/>
<dbReference type="Proteomes" id="UP000000583">
    <property type="component" value="Chromosome"/>
</dbReference>
<dbReference type="Proteomes" id="UP000000801">
    <property type="component" value="Chromosome"/>
</dbReference>
<dbReference type="GO" id="GO:0005737">
    <property type="term" value="C:cytoplasm"/>
    <property type="evidence" value="ECO:0007669"/>
    <property type="project" value="UniProtKB-SubCell"/>
</dbReference>
<dbReference type="GO" id="GO:0004045">
    <property type="term" value="F:peptidyl-tRNA hydrolase activity"/>
    <property type="evidence" value="ECO:0007669"/>
    <property type="project" value="UniProtKB-UniRule"/>
</dbReference>
<dbReference type="GO" id="GO:0000049">
    <property type="term" value="F:tRNA binding"/>
    <property type="evidence" value="ECO:0007669"/>
    <property type="project" value="UniProtKB-UniRule"/>
</dbReference>
<dbReference type="GO" id="GO:0006515">
    <property type="term" value="P:protein quality control for misfolded or incompletely synthesized proteins"/>
    <property type="evidence" value="ECO:0007669"/>
    <property type="project" value="UniProtKB-UniRule"/>
</dbReference>
<dbReference type="GO" id="GO:0072344">
    <property type="term" value="P:rescue of stalled ribosome"/>
    <property type="evidence" value="ECO:0007669"/>
    <property type="project" value="UniProtKB-UniRule"/>
</dbReference>
<dbReference type="CDD" id="cd00462">
    <property type="entry name" value="PTH"/>
    <property type="match status" value="1"/>
</dbReference>
<dbReference type="Gene3D" id="3.40.50.1470">
    <property type="entry name" value="Peptidyl-tRNA hydrolase"/>
    <property type="match status" value="1"/>
</dbReference>
<dbReference type="HAMAP" id="MF_00083">
    <property type="entry name" value="Pept_tRNA_hydro_bact"/>
    <property type="match status" value="1"/>
</dbReference>
<dbReference type="InterPro" id="IPR001328">
    <property type="entry name" value="Pept_tRNA_hydro"/>
</dbReference>
<dbReference type="InterPro" id="IPR018171">
    <property type="entry name" value="Pept_tRNA_hydro_CS"/>
</dbReference>
<dbReference type="InterPro" id="IPR036416">
    <property type="entry name" value="Pept_tRNA_hydro_sf"/>
</dbReference>
<dbReference type="NCBIfam" id="TIGR00447">
    <property type="entry name" value="pth"/>
    <property type="match status" value="1"/>
</dbReference>
<dbReference type="PANTHER" id="PTHR17224">
    <property type="entry name" value="PEPTIDYL-TRNA HYDROLASE"/>
    <property type="match status" value="1"/>
</dbReference>
<dbReference type="PANTHER" id="PTHR17224:SF1">
    <property type="entry name" value="PEPTIDYL-TRNA HYDROLASE"/>
    <property type="match status" value="1"/>
</dbReference>
<dbReference type="Pfam" id="PF01195">
    <property type="entry name" value="Pept_tRNA_hydro"/>
    <property type="match status" value="1"/>
</dbReference>
<dbReference type="SUPFAM" id="SSF53178">
    <property type="entry name" value="Peptidyl-tRNA hydrolase-like"/>
    <property type="match status" value="1"/>
</dbReference>
<dbReference type="PROSITE" id="PS01195">
    <property type="entry name" value="PEPT_TRNA_HYDROL_1"/>
    <property type="match status" value="1"/>
</dbReference>
<dbReference type="PROSITE" id="PS01196">
    <property type="entry name" value="PEPT_TRNA_HYDROL_2"/>
    <property type="match status" value="1"/>
</dbReference>
<proteinExistence type="inferred from homology"/>
<gene>
    <name evidence="1" type="primary">pth</name>
    <name type="ordered locus">CPn_0950</name>
    <name type="ordered locus">CP_0909</name>
    <name type="ordered locus">CpB0987</name>
</gene>
<accession>Q9Z6V6</accession>
<accession>Q9JQC0</accession>
<protein>
    <recommendedName>
        <fullName evidence="1">Peptidyl-tRNA hydrolase</fullName>
        <shortName evidence="1">Pth</shortName>
        <ecNumber evidence="1">3.1.1.29</ecNumber>
    </recommendedName>
</protein>
<reference key="1">
    <citation type="journal article" date="1999" name="Nat. Genet.">
        <title>Comparative genomes of Chlamydia pneumoniae and C. trachomatis.</title>
        <authorList>
            <person name="Kalman S."/>
            <person name="Mitchell W.P."/>
            <person name="Marathe R."/>
            <person name="Lammel C.J."/>
            <person name="Fan J."/>
            <person name="Hyman R.W."/>
            <person name="Olinger L."/>
            <person name="Grimwood J."/>
            <person name="Davis R.W."/>
            <person name="Stephens R.S."/>
        </authorList>
    </citation>
    <scope>NUCLEOTIDE SEQUENCE [LARGE SCALE GENOMIC DNA]</scope>
    <source>
        <strain>CWL029</strain>
    </source>
</reference>
<reference key="2">
    <citation type="journal article" date="2000" name="Nucleic Acids Res.">
        <title>Genome sequences of Chlamydia trachomatis MoPn and Chlamydia pneumoniae AR39.</title>
        <authorList>
            <person name="Read T.D."/>
            <person name="Brunham R.C."/>
            <person name="Shen C."/>
            <person name="Gill S.R."/>
            <person name="Heidelberg J.F."/>
            <person name="White O."/>
            <person name="Hickey E.K."/>
            <person name="Peterson J.D."/>
            <person name="Utterback T.R."/>
            <person name="Berry K.J."/>
            <person name="Bass S."/>
            <person name="Linher K.D."/>
            <person name="Weidman J.F."/>
            <person name="Khouri H.M."/>
            <person name="Craven B."/>
            <person name="Bowman C."/>
            <person name="Dodson R.J."/>
            <person name="Gwinn M.L."/>
            <person name="Nelson W.C."/>
            <person name="DeBoy R.T."/>
            <person name="Kolonay J.F."/>
            <person name="McClarty G."/>
            <person name="Salzberg S.L."/>
            <person name="Eisen J.A."/>
            <person name="Fraser C.M."/>
        </authorList>
    </citation>
    <scope>NUCLEOTIDE SEQUENCE [LARGE SCALE GENOMIC DNA]</scope>
    <source>
        <strain>AR39</strain>
    </source>
</reference>
<reference key="3">
    <citation type="journal article" date="2000" name="Nucleic Acids Res.">
        <title>Comparison of whole genome sequences of Chlamydia pneumoniae J138 from Japan and CWL029 from USA.</title>
        <authorList>
            <person name="Shirai M."/>
            <person name="Hirakawa H."/>
            <person name="Kimoto M."/>
            <person name="Tabuchi M."/>
            <person name="Kishi F."/>
            <person name="Ouchi K."/>
            <person name="Shiba T."/>
            <person name="Ishii K."/>
            <person name="Hattori M."/>
            <person name="Kuhara S."/>
            <person name="Nakazawa T."/>
        </authorList>
    </citation>
    <scope>NUCLEOTIDE SEQUENCE [LARGE SCALE GENOMIC DNA]</scope>
    <source>
        <strain>J138</strain>
    </source>
</reference>
<reference key="4">
    <citation type="submission" date="2002-05" db="EMBL/GenBank/DDBJ databases">
        <title>The genome sequence of Chlamydia pneumoniae TW183 and comparison with other Chlamydia strains based on whole genome sequence analysis.</title>
        <authorList>
            <person name="Geng M.M."/>
            <person name="Schuhmacher A."/>
            <person name="Muehldorfer I."/>
            <person name="Bensch K.W."/>
            <person name="Schaefer K.P."/>
            <person name="Schneider S."/>
            <person name="Pohl T."/>
            <person name="Essig A."/>
            <person name="Marre R."/>
            <person name="Melchers K."/>
        </authorList>
    </citation>
    <scope>NUCLEOTIDE SEQUENCE [LARGE SCALE GENOMIC DNA]</scope>
    <source>
        <strain>TW-183</strain>
    </source>
</reference>
<sequence>MAKLIVAIGNPRHGYANTRHNAGFLLADRLVEELQGPPFKPLSKCHALMTLVESSSGPLVFIKPTTFVNLSGKAVVLAKKYFNVALSHILVLADDVNRSFGKLRLCFNGGSGGHNGLKSITASLGSNEYWQLRFGVGRPLEEGVELSNFVLGKFSEEENLQLGSIFVEASTLFTEWCSKF</sequence>
<keyword id="KW-0963">Cytoplasm</keyword>
<keyword id="KW-0378">Hydrolase</keyword>
<keyword id="KW-0694">RNA-binding</keyword>
<keyword id="KW-0820">tRNA-binding</keyword>
<name>PTH_CHLPN</name>
<evidence type="ECO:0000255" key="1">
    <source>
        <dbReference type="HAMAP-Rule" id="MF_00083"/>
    </source>
</evidence>
<feature type="chain" id="PRO_0000187718" description="Peptidyl-tRNA hydrolase">
    <location>
        <begin position="1"/>
        <end position="180"/>
    </location>
</feature>
<feature type="active site" description="Proton acceptor" evidence="1">
    <location>
        <position position="20"/>
    </location>
</feature>
<feature type="binding site" evidence="1">
    <location>
        <position position="15"/>
    </location>
    <ligand>
        <name>tRNA</name>
        <dbReference type="ChEBI" id="CHEBI:17843"/>
    </ligand>
</feature>
<feature type="binding site" evidence="1">
    <location>
        <position position="67"/>
    </location>
    <ligand>
        <name>tRNA</name>
        <dbReference type="ChEBI" id="CHEBI:17843"/>
    </ligand>
</feature>
<feature type="binding site" evidence="1">
    <location>
        <position position="69"/>
    </location>
    <ligand>
        <name>tRNA</name>
        <dbReference type="ChEBI" id="CHEBI:17843"/>
    </ligand>
</feature>
<feature type="binding site" evidence="1">
    <location>
        <position position="115"/>
    </location>
    <ligand>
        <name>tRNA</name>
        <dbReference type="ChEBI" id="CHEBI:17843"/>
    </ligand>
</feature>
<feature type="site" description="Discriminates between blocked and unblocked aminoacyl-tRNA" evidence="1">
    <location>
        <position position="10"/>
    </location>
</feature>
<feature type="site" description="Stabilizes the basic form of H active site to accept a proton" evidence="1">
    <location>
        <position position="94"/>
    </location>
</feature>